<protein>
    <recommendedName>
        <fullName evidence="1">Small ribosomal subunit protein uS7</fullName>
    </recommendedName>
    <alternativeName>
        <fullName evidence="2">30S ribosomal protein S7</fullName>
    </alternativeName>
</protein>
<name>RS7_SHIF8</name>
<proteinExistence type="inferred from homology"/>
<feature type="chain" id="PRO_1000014291" description="Small ribosomal subunit protein uS7">
    <location>
        <begin position="1"/>
        <end position="179"/>
    </location>
</feature>
<accession>Q0SZX6</accession>
<comment type="function">
    <text evidence="1">One of the primary rRNA binding proteins, it binds directly to 16S rRNA where it nucleates assembly of the head domain of the 30S subunit. Is located at the subunit interface close to the decoding center, probably blocks exit of the E-site tRNA.</text>
</comment>
<comment type="subunit">
    <text evidence="1">Part of the 30S ribosomal subunit. Contacts proteins S9 and S11.</text>
</comment>
<comment type="similarity">
    <text evidence="1">Belongs to the universal ribosomal protein uS7 family.</text>
</comment>
<organism>
    <name type="scientific">Shigella flexneri serotype 5b (strain 8401)</name>
    <dbReference type="NCBI Taxonomy" id="373384"/>
    <lineage>
        <taxon>Bacteria</taxon>
        <taxon>Pseudomonadati</taxon>
        <taxon>Pseudomonadota</taxon>
        <taxon>Gammaproteobacteria</taxon>
        <taxon>Enterobacterales</taxon>
        <taxon>Enterobacteriaceae</taxon>
        <taxon>Shigella</taxon>
    </lineage>
</organism>
<gene>
    <name evidence="1" type="primary">rpsG</name>
    <name type="ordered locus">SFV_3346</name>
</gene>
<reference key="1">
    <citation type="journal article" date="2006" name="BMC Genomics">
        <title>Complete genome sequence of Shigella flexneri 5b and comparison with Shigella flexneri 2a.</title>
        <authorList>
            <person name="Nie H."/>
            <person name="Yang F."/>
            <person name="Zhang X."/>
            <person name="Yang J."/>
            <person name="Chen L."/>
            <person name="Wang J."/>
            <person name="Xiong Z."/>
            <person name="Peng J."/>
            <person name="Sun L."/>
            <person name="Dong J."/>
            <person name="Xue Y."/>
            <person name="Xu X."/>
            <person name="Chen S."/>
            <person name="Yao Z."/>
            <person name="Shen Y."/>
            <person name="Jin Q."/>
        </authorList>
    </citation>
    <scope>NUCLEOTIDE SEQUENCE [LARGE SCALE GENOMIC DNA]</scope>
    <source>
        <strain>8401</strain>
    </source>
</reference>
<dbReference type="EMBL" id="CP000266">
    <property type="protein sequence ID" value="ABF05389.1"/>
    <property type="molecule type" value="Genomic_DNA"/>
</dbReference>
<dbReference type="SMR" id="Q0SZX6"/>
<dbReference type="KEGG" id="sfv:SFV_3346"/>
<dbReference type="HOGENOM" id="CLU_072226_1_1_6"/>
<dbReference type="Proteomes" id="UP000000659">
    <property type="component" value="Chromosome"/>
</dbReference>
<dbReference type="GO" id="GO:0015935">
    <property type="term" value="C:small ribosomal subunit"/>
    <property type="evidence" value="ECO:0007669"/>
    <property type="project" value="InterPro"/>
</dbReference>
<dbReference type="GO" id="GO:0019843">
    <property type="term" value="F:rRNA binding"/>
    <property type="evidence" value="ECO:0007669"/>
    <property type="project" value="UniProtKB-UniRule"/>
</dbReference>
<dbReference type="GO" id="GO:0003735">
    <property type="term" value="F:structural constituent of ribosome"/>
    <property type="evidence" value="ECO:0007669"/>
    <property type="project" value="InterPro"/>
</dbReference>
<dbReference type="GO" id="GO:0000049">
    <property type="term" value="F:tRNA binding"/>
    <property type="evidence" value="ECO:0007669"/>
    <property type="project" value="UniProtKB-UniRule"/>
</dbReference>
<dbReference type="GO" id="GO:0006412">
    <property type="term" value="P:translation"/>
    <property type="evidence" value="ECO:0007669"/>
    <property type="project" value="UniProtKB-UniRule"/>
</dbReference>
<dbReference type="CDD" id="cd14869">
    <property type="entry name" value="uS7_Bacteria"/>
    <property type="match status" value="1"/>
</dbReference>
<dbReference type="FunFam" id="1.10.455.10:FF:000001">
    <property type="entry name" value="30S ribosomal protein S7"/>
    <property type="match status" value="1"/>
</dbReference>
<dbReference type="Gene3D" id="1.10.455.10">
    <property type="entry name" value="Ribosomal protein S7 domain"/>
    <property type="match status" value="1"/>
</dbReference>
<dbReference type="HAMAP" id="MF_00480_B">
    <property type="entry name" value="Ribosomal_uS7_B"/>
    <property type="match status" value="1"/>
</dbReference>
<dbReference type="InterPro" id="IPR000235">
    <property type="entry name" value="Ribosomal_uS7"/>
</dbReference>
<dbReference type="InterPro" id="IPR005717">
    <property type="entry name" value="Ribosomal_uS7_bac/org-type"/>
</dbReference>
<dbReference type="InterPro" id="IPR020606">
    <property type="entry name" value="Ribosomal_uS7_CS"/>
</dbReference>
<dbReference type="InterPro" id="IPR023798">
    <property type="entry name" value="Ribosomal_uS7_dom"/>
</dbReference>
<dbReference type="InterPro" id="IPR036823">
    <property type="entry name" value="Ribosomal_uS7_dom_sf"/>
</dbReference>
<dbReference type="NCBIfam" id="TIGR01029">
    <property type="entry name" value="rpsG_bact"/>
    <property type="match status" value="1"/>
</dbReference>
<dbReference type="PANTHER" id="PTHR11205">
    <property type="entry name" value="RIBOSOMAL PROTEIN S7"/>
    <property type="match status" value="1"/>
</dbReference>
<dbReference type="Pfam" id="PF00177">
    <property type="entry name" value="Ribosomal_S7"/>
    <property type="match status" value="1"/>
</dbReference>
<dbReference type="PIRSF" id="PIRSF002122">
    <property type="entry name" value="RPS7p_RPS7a_RPS5e_RPS7o"/>
    <property type="match status" value="1"/>
</dbReference>
<dbReference type="SUPFAM" id="SSF47973">
    <property type="entry name" value="Ribosomal protein S7"/>
    <property type="match status" value="1"/>
</dbReference>
<dbReference type="PROSITE" id="PS00052">
    <property type="entry name" value="RIBOSOMAL_S7"/>
    <property type="match status" value="1"/>
</dbReference>
<evidence type="ECO:0000255" key="1">
    <source>
        <dbReference type="HAMAP-Rule" id="MF_00480"/>
    </source>
</evidence>
<evidence type="ECO:0000305" key="2"/>
<keyword id="KW-0687">Ribonucleoprotein</keyword>
<keyword id="KW-0689">Ribosomal protein</keyword>
<keyword id="KW-0694">RNA-binding</keyword>
<keyword id="KW-0699">rRNA-binding</keyword>
<keyword id="KW-0820">tRNA-binding</keyword>
<sequence>MPRRRVIGQRKILPDPKFGSELLAKFVNILMVDGKKSTAESIVYSALETLAQRSGKSELEAFEVALENVRPTVEVKSRRVGGSTYQVPVEVRPVRRNALAMRWIVEAARKRGDKSMALRLANELSDAAENKGTAVKKREDVHRMAEANKAFAHYRWKSLRSFSHQAGASSKQPALGYLN</sequence>